<reference key="1">
    <citation type="submission" date="2009-01" db="EMBL/GenBank/DDBJ databases">
        <title>Complete sequence of Desulfovibrio desulfuricans subsp. desulfuricans str. ATCC 27774.</title>
        <authorList>
            <consortium name="US DOE Joint Genome Institute"/>
            <person name="Lucas S."/>
            <person name="Copeland A."/>
            <person name="Lapidus A."/>
            <person name="Glavina del Rio T."/>
            <person name="Tice H."/>
            <person name="Bruce D."/>
            <person name="Goodwin L."/>
            <person name="Pitluck S."/>
            <person name="Sims D."/>
            <person name="Lu M."/>
            <person name="Kiss H."/>
            <person name="Meineke L."/>
            <person name="Brettin T."/>
            <person name="Detter J.C."/>
            <person name="Han C."/>
            <person name="Larimer F."/>
            <person name="Land M."/>
            <person name="Hauser L."/>
            <person name="Kyrpides N."/>
            <person name="Ovchinnikova G."/>
            <person name="Hazen T.C."/>
        </authorList>
    </citation>
    <scope>NUCLEOTIDE SEQUENCE [LARGE SCALE GENOMIC DNA]</scope>
    <source>
        <strain>ATCC 27774 / DSM 6949 / MB</strain>
    </source>
</reference>
<gene>
    <name type="primary">bioF</name>
    <name type="ordered locus">Ddes_0423</name>
</gene>
<keyword id="KW-0093">Biotin biosynthesis</keyword>
<keyword id="KW-0663">Pyridoxal phosphate</keyword>
<keyword id="KW-0808">Transferase</keyword>
<organism>
    <name type="scientific">Desulfovibrio desulfuricans (strain ATCC 27774 / DSM 6949 / MB)</name>
    <dbReference type="NCBI Taxonomy" id="525146"/>
    <lineage>
        <taxon>Bacteria</taxon>
        <taxon>Pseudomonadati</taxon>
        <taxon>Thermodesulfobacteriota</taxon>
        <taxon>Desulfovibrionia</taxon>
        <taxon>Desulfovibrionales</taxon>
        <taxon>Desulfovibrionaceae</taxon>
        <taxon>Desulfovibrio</taxon>
    </lineage>
</organism>
<name>BIOF_DESDA</name>
<proteinExistence type="inferred from homology"/>
<comment type="function">
    <text evidence="1">Catalyzes the decarboxylative condensation of pimeloyl-[acyl-carrier protein] and L-alanine to produce 8-amino-7-oxononanoate (AON), [acyl-carrier protein], and carbon dioxide.</text>
</comment>
<comment type="catalytic activity">
    <reaction>
        <text>6-carboxyhexanoyl-[ACP] + L-alanine + H(+) = (8S)-8-amino-7-oxononanoate + holo-[ACP] + CO2</text>
        <dbReference type="Rhea" id="RHEA:42288"/>
        <dbReference type="Rhea" id="RHEA-COMP:9685"/>
        <dbReference type="Rhea" id="RHEA-COMP:9955"/>
        <dbReference type="ChEBI" id="CHEBI:15378"/>
        <dbReference type="ChEBI" id="CHEBI:16526"/>
        <dbReference type="ChEBI" id="CHEBI:57972"/>
        <dbReference type="ChEBI" id="CHEBI:64479"/>
        <dbReference type="ChEBI" id="CHEBI:78846"/>
        <dbReference type="ChEBI" id="CHEBI:149468"/>
        <dbReference type="EC" id="2.3.1.47"/>
    </reaction>
</comment>
<comment type="cofactor">
    <cofactor evidence="1">
        <name>pyridoxal 5'-phosphate</name>
        <dbReference type="ChEBI" id="CHEBI:597326"/>
    </cofactor>
</comment>
<comment type="pathway">
    <text>Cofactor biosynthesis; biotin biosynthesis.</text>
</comment>
<comment type="subunit">
    <text evidence="1">Homodimer.</text>
</comment>
<comment type="similarity">
    <text evidence="2">Belongs to the class-II pyridoxal-phosphate-dependent aminotransferase family. BioF subfamily.</text>
</comment>
<evidence type="ECO:0000250" key="1"/>
<evidence type="ECO:0000305" key="2"/>
<feature type="chain" id="PRO_0000380965" description="Putative 8-amino-7-oxononanoate synthase">
    <location>
        <begin position="1"/>
        <end position="384"/>
    </location>
</feature>
<feature type="binding site" evidence="1">
    <location>
        <position position="18"/>
    </location>
    <ligand>
        <name>substrate</name>
    </ligand>
</feature>
<feature type="binding site" evidence="1">
    <location>
        <begin position="105"/>
        <end position="106"/>
    </location>
    <ligand>
        <name>pyridoxal 5'-phosphate</name>
        <dbReference type="ChEBI" id="CHEBI:597326"/>
    </ligand>
</feature>
<feature type="binding site" evidence="1">
    <location>
        <position position="130"/>
    </location>
    <ligand>
        <name>substrate</name>
    </ligand>
</feature>
<feature type="binding site" evidence="1">
    <location>
        <position position="176"/>
    </location>
    <ligand>
        <name>pyridoxal 5'-phosphate</name>
        <dbReference type="ChEBI" id="CHEBI:597326"/>
    </ligand>
</feature>
<feature type="binding site" evidence="1">
    <location>
        <begin position="201"/>
        <end position="204"/>
    </location>
    <ligand>
        <name>pyridoxal 5'-phosphate</name>
        <dbReference type="ChEBI" id="CHEBI:597326"/>
    </ligand>
</feature>
<feature type="binding site" evidence="1">
    <location>
        <begin position="233"/>
        <end position="236"/>
    </location>
    <ligand>
        <name>pyridoxal 5'-phosphate</name>
        <dbReference type="ChEBI" id="CHEBI:597326"/>
    </ligand>
</feature>
<feature type="binding site" evidence="1">
    <location>
        <position position="349"/>
    </location>
    <ligand>
        <name>substrate</name>
    </ligand>
</feature>
<feature type="modified residue" description="N6-(pyridoxal phosphate)lysine" evidence="1">
    <location>
        <position position="236"/>
    </location>
</feature>
<accession>B8J3V0</accession>
<dbReference type="EC" id="2.3.1.47"/>
<dbReference type="EMBL" id="CP001358">
    <property type="protein sequence ID" value="ACL48335.1"/>
    <property type="molecule type" value="Genomic_DNA"/>
</dbReference>
<dbReference type="SMR" id="B8J3V0"/>
<dbReference type="STRING" id="525146.Ddes_0423"/>
<dbReference type="KEGG" id="dds:Ddes_0423"/>
<dbReference type="eggNOG" id="COG0156">
    <property type="taxonomic scope" value="Bacteria"/>
</dbReference>
<dbReference type="HOGENOM" id="CLU_015846_11_0_7"/>
<dbReference type="UniPathway" id="UPA00078"/>
<dbReference type="GO" id="GO:0008710">
    <property type="term" value="F:8-amino-7-oxononanoate synthase activity"/>
    <property type="evidence" value="ECO:0007669"/>
    <property type="project" value="UniProtKB-EC"/>
</dbReference>
<dbReference type="GO" id="GO:0030170">
    <property type="term" value="F:pyridoxal phosphate binding"/>
    <property type="evidence" value="ECO:0007669"/>
    <property type="project" value="InterPro"/>
</dbReference>
<dbReference type="GO" id="GO:0009102">
    <property type="term" value="P:biotin biosynthetic process"/>
    <property type="evidence" value="ECO:0007669"/>
    <property type="project" value="UniProtKB-UniPathway"/>
</dbReference>
<dbReference type="CDD" id="cd06454">
    <property type="entry name" value="KBL_like"/>
    <property type="match status" value="1"/>
</dbReference>
<dbReference type="Gene3D" id="3.90.1150.10">
    <property type="entry name" value="Aspartate Aminotransferase, domain 1"/>
    <property type="match status" value="1"/>
</dbReference>
<dbReference type="Gene3D" id="3.40.640.10">
    <property type="entry name" value="Type I PLP-dependent aspartate aminotransferase-like (Major domain)"/>
    <property type="match status" value="1"/>
</dbReference>
<dbReference type="InterPro" id="IPR004839">
    <property type="entry name" value="Aminotransferase_I/II_large"/>
</dbReference>
<dbReference type="InterPro" id="IPR050087">
    <property type="entry name" value="AON_synthase_class-II"/>
</dbReference>
<dbReference type="InterPro" id="IPR004723">
    <property type="entry name" value="AONS_Archaea/Proteobacteria"/>
</dbReference>
<dbReference type="InterPro" id="IPR015424">
    <property type="entry name" value="PyrdxlP-dep_Trfase"/>
</dbReference>
<dbReference type="InterPro" id="IPR015421">
    <property type="entry name" value="PyrdxlP-dep_Trfase_major"/>
</dbReference>
<dbReference type="InterPro" id="IPR015422">
    <property type="entry name" value="PyrdxlP-dep_Trfase_small"/>
</dbReference>
<dbReference type="NCBIfam" id="TIGR00858">
    <property type="entry name" value="bioF"/>
    <property type="match status" value="1"/>
</dbReference>
<dbReference type="PANTHER" id="PTHR13693">
    <property type="entry name" value="CLASS II AMINOTRANSFERASE/8-AMINO-7-OXONONANOATE SYNTHASE"/>
    <property type="match status" value="1"/>
</dbReference>
<dbReference type="Pfam" id="PF00155">
    <property type="entry name" value="Aminotran_1_2"/>
    <property type="match status" value="1"/>
</dbReference>
<dbReference type="SUPFAM" id="SSF53383">
    <property type="entry name" value="PLP-dependent transferases"/>
    <property type="match status" value="1"/>
</dbReference>
<sequence length="384" mass="40916">MSDVAARLETIRAAHLYRRLRTLSTPQDREVVIDGRRVLLFSSNSYLGLGINAHIRRSAVRALEKFGTGAGGSRLVTGNMTPHMQLESALAAFKGSESALAFTSGYTANMGVISALCHKDTVIFSDALNHASIIDGCRLARGRTVVYAHNDMDDLLEKIRQLRPRQGFIITDGVFSMDGDLARLPELAHIARSYGLTLMVDDAHATGVLGATGRGTLEHFGLSHEDVPVVTGTLSKAIPSEGGFVCGSEILCELLRNTARPFIFTTAPSPAAVAAATAGIGHIAAHPGLVRRLQDNVAYFTGSLAEQGMHVPGQSPIIPIMAGEEEKAVRAAEALLALGVFAPCIRYPTVPRGQARLRLTVMASHTRDDLDHAAVSLRKALAGV</sequence>
<protein>
    <recommendedName>
        <fullName>Putative 8-amino-7-oxononanoate synthase</fullName>
        <shortName>AONS</shortName>
        <ecNumber>2.3.1.47</ecNumber>
    </recommendedName>
    <alternativeName>
        <fullName>7-keto-8-amino-pelargonic acid synthase</fullName>
        <shortName>7-KAP synthase</shortName>
    </alternativeName>
    <alternativeName>
        <fullName>8-amino-7-ketopelargonate synthase</fullName>
    </alternativeName>
</protein>